<accession>C5M2X8</accession>
<dbReference type="EC" id="3.1.-.-" evidence="1"/>
<dbReference type="EMBL" id="GG692395">
    <property type="protein sequence ID" value="EER35678.1"/>
    <property type="molecule type" value="Genomic_DNA"/>
</dbReference>
<dbReference type="RefSeq" id="XP_002545636.1">
    <property type="nucleotide sequence ID" value="XM_002545590.1"/>
</dbReference>
<dbReference type="SMR" id="C5M2X8"/>
<dbReference type="STRING" id="294747.C5M2X8"/>
<dbReference type="EnsemblFungi" id="CTRG_00417-t43_1">
    <property type="protein sequence ID" value="CTRG_00417-t43_1-p1"/>
    <property type="gene ID" value="CTRG_00417"/>
</dbReference>
<dbReference type="GeneID" id="8298216"/>
<dbReference type="KEGG" id="ctp:CTRG_00417"/>
<dbReference type="VEuPathDB" id="FungiDB:CTRG_00417"/>
<dbReference type="eggNOG" id="KOG2519">
    <property type="taxonomic scope" value="Eukaryota"/>
</dbReference>
<dbReference type="HOGENOM" id="CLU_032444_2_0_1"/>
<dbReference type="OrthoDB" id="1937206at2759"/>
<dbReference type="Proteomes" id="UP000002037">
    <property type="component" value="Unassembled WGS sequence"/>
</dbReference>
<dbReference type="GO" id="GO:0005739">
    <property type="term" value="C:mitochondrion"/>
    <property type="evidence" value="ECO:0007669"/>
    <property type="project" value="UniProtKB-SubCell"/>
</dbReference>
<dbReference type="GO" id="GO:0005730">
    <property type="term" value="C:nucleolus"/>
    <property type="evidence" value="ECO:0007669"/>
    <property type="project" value="UniProtKB-SubCell"/>
</dbReference>
<dbReference type="GO" id="GO:0005654">
    <property type="term" value="C:nucleoplasm"/>
    <property type="evidence" value="ECO:0007669"/>
    <property type="project" value="UniProtKB-SubCell"/>
</dbReference>
<dbReference type="GO" id="GO:0008409">
    <property type="term" value="F:5'-3' exonuclease activity"/>
    <property type="evidence" value="ECO:0007669"/>
    <property type="project" value="UniProtKB-UniRule"/>
</dbReference>
<dbReference type="GO" id="GO:0017108">
    <property type="term" value="F:5'-flap endonuclease activity"/>
    <property type="evidence" value="ECO:0007669"/>
    <property type="project" value="UniProtKB-UniRule"/>
</dbReference>
<dbReference type="GO" id="GO:0003677">
    <property type="term" value="F:DNA binding"/>
    <property type="evidence" value="ECO:0007669"/>
    <property type="project" value="UniProtKB-UniRule"/>
</dbReference>
<dbReference type="GO" id="GO:0000287">
    <property type="term" value="F:magnesium ion binding"/>
    <property type="evidence" value="ECO:0007669"/>
    <property type="project" value="UniProtKB-UniRule"/>
</dbReference>
<dbReference type="GO" id="GO:0006284">
    <property type="term" value="P:base-excision repair"/>
    <property type="evidence" value="ECO:0007669"/>
    <property type="project" value="UniProtKB-UniRule"/>
</dbReference>
<dbReference type="GO" id="GO:0043137">
    <property type="term" value="P:DNA replication, removal of RNA primer"/>
    <property type="evidence" value="ECO:0007669"/>
    <property type="project" value="UniProtKB-UniRule"/>
</dbReference>
<dbReference type="CDD" id="cd09907">
    <property type="entry name" value="H3TH_FEN1-Euk"/>
    <property type="match status" value="1"/>
</dbReference>
<dbReference type="CDD" id="cd09867">
    <property type="entry name" value="PIN_FEN1"/>
    <property type="match status" value="1"/>
</dbReference>
<dbReference type="FunFam" id="1.10.150.20:FF:000009">
    <property type="entry name" value="Flap endonuclease 1"/>
    <property type="match status" value="1"/>
</dbReference>
<dbReference type="FunFam" id="3.40.50.1010:FF:000003">
    <property type="entry name" value="Flap endonuclease 1"/>
    <property type="match status" value="1"/>
</dbReference>
<dbReference type="Gene3D" id="1.10.150.20">
    <property type="entry name" value="5' to 3' exonuclease, C-terminal subdomain"/>
    <property type="match status" value="1"/>
</dbReference>
<dbReference type="Gene3D" id="3.40.50.1010">
    <property type="entry name" value="5'-nuclease"/>
    <property type="match status" value="1"/>
</dbReference>
<dbReference type="HAMAP" id="MF_00614">
    <property type="entry name" value="Fen"/>
    <property type="match status" value="1"/>
</dbReference>
<dbReference type="InterPro" id="IPR036279">
    <property type="entry name" value="5-3_exonuclease_C_sf"/>
</dbReference>
<dbReference type="InterPro" id="IPR023426">
    <property type="entry name" value="Flap_endonuc"/>
</dbReference>
<dbReference type="InterPro" id="IPR008918">
    <property type="entry name" value="HhH2"/>
</dbReference>
<dbReference type="InterPro" id="IPR029060">
    <property type="entry name" value="PIN-like_dom_sf"/>
</dbReference>
<dbReference type="InterPro" id="IPR006086">
    <property type="entry name" value="XPG-I_dom"/>
</dbReference>
<dbReference type="InterPro" id="IPR006084">
    <property type="entry name" value="XPG/Rad2"/>
</dbReference>
<dbReference type="InterPro" id="IPR019974">
    <property type="entry name" value="XPG_CS"/>
</dbReference>
<dbReference type="InterPro" id="IPR006085">
    <property type="entry name" value="XPG_DNA_repair_N"/>
</dbReference>
<dbReference type="PANTHER" id="PTHR11081:SF9">
    <property type="entry name" value="FLAP ENDONUCLEASE 1"/>
    <property type="match status" value="1"/>
</dbReference>
<dbReference type="PANTHER" id="PTHR11081">
    <property type="entry name" value="FLAP ENDONUCLEASE FAMILY MEMBER"/>
    <property type="match status" value="1"/>
</dbReference>
<dbReference type="Pfam" id="PF00867">
    <property type="entry name" value="XPG_I"/>
    <property type="match status" value="1"/>
</dbReference>
<dbReference type="Pfam" id="PF00752">
    <property type="entry name" value="XPG_N"/>
    <property type="match status" value="1"/>
</dbReference>
<dbReference type="PRINTS" id="PR00853">
    <property type="entry name" value="XPGRADSUPER"/>
</dbReference>
<dbReference type="SMART" id="SM00279">
    <property type="entry name" value="HhH2"/>
    <property type="match status" value="1"/>
</dbReference>
<dbReference type="SMART" id="SM00484">
    <property type="entry name" value="XPGI"/>
    <property type="match status" value="1"/>
</dbReference>
<dbReference type="SMART" id="SM00485">
    <property type="entry name" value="XPGN"/>
    <property type="match status" value="1"/>
</dbReference>
<dbReference type="SUPFAM" id="SSF47807">
    <property type="entry name" value="5' to 3' exonuclease, C-terminal subdomain"/>
    <property type="match status" value="1"/>
</dbReference>
<dbReference type="SUPFAM" id="SSF88723">
    <property type="entry name" value="PIN domain-like"/>
    <property type="match status" value="1"/>
</dbReference>
<dbReference type="PROSITE" id="PS00841">
    <property type="entry name" value="XPG_1"/>
    <property type="match status" value="1"/>
</dbReference>
<feature type="chain" id="PRO_0000403570" description="Flap endonuclease 1">
    <location>
        <begin position="1"/>
        <end position="374"/>
    </location>
</feature>
<feature type="region of interest" description="N-domain">
    <location>
        <begin position="1"/>
        <end position="105"/>
    </location>
</feature>
<feature type="region of interest" description="I-domain">
    <location>
        <begin position="123"/>
        <end position="254"/>
    </location>
</feature>
<feature type="region of interest" description="Interaction with PCNA" evidence="1">
    <location>
        <begin position="339"/>
        <end position="347"/>
    </location>
</feature>
<feature type="region of interest" description="Disordered" evidence="2">
    <location>
        <begin position="353"/>
        <end position="374"/>
    </location>
</feature>
<feature type="binding site" evidence="1">
    <location>
        <position position="34"/>
    </location>
    <ligand>
        <name>Mg(2+)</name>
        <dbReference type="ChEBI" id="CHEBI:18420"/>
        <label>1</label>
    </ligand>
</feature>
<feature type="binding site" evidence="1">
    <location>
        <position position="47"/>
    </location>
    <ligand>
        <name>DNA</name>
        <dbReference type="ChEBI" id="CHEBI:16991"/>
    </ligand>
</feature>
<feature type="binding site" evidence="1">
    <location>
        <position position="71"/>
    </location>
    <ligand>
        <name>DNA</name>
        <dbReference type="ChEBI" id="CHEBI:16991"/>
    </ligand>
</feature>
<feature type="binding site" evidence="1">
    <location>
        <position position="87"/>
    </location>
    <ligand>
        <name>Mg(2+)</name>
        <dbReference type="ChEBI" id="CHEBI:18420"/>
        <label>1</label>
    </ligand>
</feature>
<feature type="binding site" evidence="1">
    <location>
        <position position="159"/>
    </location>
    <ligand>
        <name>DNA</name>
        <dbReference type="ChEBI" id="CHEBI:16991"/>
    </ligand>
</feature>
<feature type="binding site" evidence="1">
    <location>
        <position position="159"/>
    </location>
    <ligand>
        <name>Mg(2+)</name>
        <dbReference type="ChEBI" id="CHEBI:18420"/>
        <label>1</label>
    </ligand>
</feature>
<feature type="binding site" evidence="1">
    <location>
        <position position="161"/>
    </location>
    <ligand>
        <name>Mg(2+)</name>
        <dbReference type="ChEBI" id="CHEBI:18420"/>
        <label>1</label>
    </ligand>
</feature>
<feature type="binding site" evidence="1">
    <location>
        <position position="180"/>
    </location>
    <ligand>
        <name>Mg(2+)</name>
        <dbReference type="ChEBI" id="CHEBI:18420"/>
        <label>2</label>
    </ligand>
</feature>
<feature type="binding site" evidence="1">
    <location>
        <position position="182"/>
    </location>
    <ligand>
        <name>Mg(2+)</name>
        <dbReference type="ChEBI" id="CHEBI:18420"/>
        <label>2</label>
    </ligand>
</feature>
<feature type="binding site" evidence="1">
    <location>
        <position position="232"/>
    </location>
    <ligand>
        <name>DNA</name>
        <dbReference type="ChEBI" id="CHEBI:16991"/>
    </ligand>
</feature>
<feature type="binding site" evidence="1">
    <location>
        <position position="234"/>
    </location>
    <ligand>
        <name>DNA</name>
        <dbReference type="ChEBI" id="CHEBI:16991"/>
    </ligand>
</feature>
<feature type="binding site" evidence="1">
    <location>
        <position position="234"/>
    </location>
    <ligand>
        <name>Mg(2+)</name>
        <dbReference type="ChEBI" id="CHEBI:18420"/>
        <label>2</label>
    </ligand>
</feature>
<name>FEN1_CANTT</name>
<organism>
    <name type="scientific">Candida tropicalis (strain ATCC MYA-3404 / T1)</name>
    <name type="common">Yeast</name>
    <dbReference type="NCBI Taxonomy" id="294747"/>
    <lineage>
        <taxon>Eukaryota</taxon>
        <taxon>Fungi</taxon>
        <taxon>Dikarya</taxon>
        <taxon>Ascomycota</taxon>
        <taxon>Saccharomycotina</taxon>
        <taxon>Pichiomycetes</taxon>
        <taxon>Debaryomycetaceae</taxon>
        <taxon>Candida/Lodderomyces clade</taxon>
        <taxon>Candida</taxon>
    </lineage>
</organism>
<comment type="function">
    <text evidence="1">Structure-specific nuclease with 5'-flap endonuclease and 5'-3' exonuclease activities involved in DNA replication and repair. During DNA replication, cleaves the 5'-overhanging flap structure that is generated by displacement synthesis when DNA polymerase encounters the 5'-end of a downstream Okazaki fragment. It enters the flap from the 5'-end and then tracks to cleave the flap base, leaving a nick for ligation. Also involved in the long patch base excision repair (LP-BER) pathway, by cleaving within the apurinic/apyrimidinic (AP) site-terminated flap. Acts as a genome stabilization factor that prevents flaps from equilibrating into structures that lead to duplications and deletions. Also possesses 5'-3' exonuclease activity on nicked or gapped double-stranded DNA, and exhibits RNase H activity. Also involved in replication and repair of rDNA and in repairing mitochondrial DNA.</text>
</comment>
<comment type="cofactor">
    <cofactor evidence="1">
        <name>Mg(2+)</name>
        <dbReference type="ChEBI" id="CHEBI:18420"/>
    </cofactor>
    <text evidence="1">Binds 2 magnesium ions per subunit. They probably participate in the reaction catalyzed by the enzyme. May bind an additional third magnesium ion after substrate binding.</text>
</comment>
<comment type="subunit">
    <text evidence="1">Interacts with PCNA. Three molecules of RAD27 bind to one PCNA trimer with each molecule binding to one PCNA monomer. PCNA stimulates the nuclease activity without altering cleavage specificity.</text>
</comment>
<comment type="subcellular location">
    <subcellularLocation>
        <location evidence="1">Nucleus</location>
        <location evidence="1">Nucleolus</location>
    </subcellularLocation>
    <subcellularLocation>
        <location evidence="1">Nucleus</location>
        <location evidence="1">Nucleoplasm</location>
    </subcellularLocation>
    <subcellularLocation>
        <location evidence="1">Mitochondrion</location>
    </subcellularLocation>
    <text evidence="1">Resides mostly in the nucleoli and relocalizes to the nucleoplasm upon DNA damage.</text>
</comment>
<comment type="PTM">
    <text evidence="1">Phosphorylated. Phosphorylation upon DNA damage induces relocalization to the nuclear plasma.</text>
</comment>
<comment type="similarity">
    <text evidence="1">Belongs to the XPG/RAD2 endonuclease family. FEN1 subfamily.</text>
</comment>
<evidence type="ECO:0000255" key="1">
    <source>
        <dbReference type="HAMAP-Rule" id="MF_03140"/>
    </source>
</evidence>
<evidence type="ECO:0000256" key="2">
    <source>
        <dbReference type="SAM" id="MobiDB-lite"/>
    </source>
</evidence>
<protein>
    <recommendedName>
        <fullName evidence="1">Flap endonuclease 1</fullName>
        <shortName evidence="1">FEN-1</shortName>
        <ecNumber evidence="1">3.1.-.-</ecNumber>
    </recommendedName>
    <alternativeName>
        <fullName evidence="1">Flap structure-specific endonuclease 1</fullName>
    </alternativeName>
</protein>
<sequence length="374" mass="42417">MGVKGLNKLIKEHSPNAYKEYQLKNLFGRKVAIDASMCLYQFLISVRQSDGQQLTNDDGETTSHLSGIFYRTIKMVENNIKPVYVFDGKPPVLKGGELEKRLLRREEAQKQKDALKDEGTVEDHLKFEKRLVRVSREQNEEAKKLLELMGIPIVEAPCEAEAQCAELARGGKVYAAASEDMDTLCYEPPQLLRHLTFAEARKIPIDEISYKEAMAGLDMNKEQFVDLCILLGCDYCETIRGVGPVTAYKLIKEHGSLEKIVEWIEKGNTKYTVPENWPYAEARELFLNPEVKKASDISLKWKEPDVEGLIEYMVKGKGFSEDRIRSGAEKLKKGLKGGVQGRLDSFFTVVKKDDGKDKKRKSTAKDTKSKKQKK</sequence>
<gene>
    <name evidence="1" type="primary">RAD27</name>
    <name evidence="1" type="synonym">FEN1</name>
    <name type="ORF">CTRG_00417</name>
</gene>
<keyword id="KW-0227">DNA damage</keyword>
<keyword id="KW-0234">DNA repair</keyword>
<keyword id="KW-0235">DNA replication</keyword>
<keyword id="KW-0255">Endonuclease</keyword>
<keyword id="KW-0269">Exonuclease</keyword>
<keyword id="KW-0378">Hydrolase</keyword>
<keyword id="KW-0460">Magnesium</keyword>
<keyword id="KW-0479">Metal-binding</keyword>
<keyword id="KW-0496">Mitochondrion</keyword>
<keyword id="KW-0540">Nuclease</keyword>
<keyword id="KW-0539">Nucleus</keyword>
<keyword id="KW-0597">Phosphoprotein</keyword>
<keyword id="KW-1185">Reference proteome</keyword>
<reference key="1">
    <citation type="journal article" date="2009" name="Nature">
        <title>Evolution of pathogenicity and sexual reproduction in eight Candida genomes.</title>
        <authorList>
            <person name="Butler G."/>
            <person name="Rasmussen M.D."/>
            <person name="Lin M.F."/>
            <person name="Santos M.A.S."/>
            <person name="Sakthikumar S."/>
            <person name="Munro C.A."/>
            <person name="Rheinbay E."/>
            <person name="Grabherr M."/>
            <person name="Forche A."/>
            <person name="Reedy J.L."/>
            <person name="Agrafioti I."/>
            <person name="Arnaud M.B."/>
            <person name="Bates S."/>
            <person name="Brown A.J.P."/>
            <person name="Brunke S."/>
            <person name="Costanzo M.C."/>
            <person name="Fitzpatrick D.A."/>
            <person name="de Groot P.W.J."/>
            <person name="Harris D."/>
            <person name="Hoyer L.L."/>
            <person name="Hube B."/>
            <person name="Klis F.M."/>
            <person name="Kodira C."/>
            <person name="Lennard N."/>
            <person name="Logue M.E."/>
            <person name="Martin R."/>
            <person name="Neiman A.M."/>
            <person name="Nikolaou E."/>
            <person name="Quail M.A."/>
            <person name="Quinn J."/>
            <person name="Santos M.C."/>
            <person name="Schmitzberger F.F."/>
            <person name="Sherlock G."/>
            <person name="Shah P."/>
            <person name="Silverstein K.A.T."/>
            <person name="Skrzypek M.S."/>
            <person name="Soll D."/>
            <person name="Staggs R."/>
            <person name="Stansfield I."/>
            <person name="Stumpf M.P.H."/>
            <person name="Sudbery P.E."/>
            <person name="Srikantha T."/>
            <person name="Zeng Q."/>
            <person name="Berman J."/>
            <person name="Berriman M."/>
            <person name="Heitman J."/>
            <person name="Gow N.A.R."/>
            <person name="Lorenz M.C."/>
            <person name="Birren B.W."/>
            <person name="Kellis M."/>
            <person name="Cuomo C.A."/>
        </authorList>
    </citation>
    <scope>NUCLEOTIDE SEQUENCE [LARGE SCALE GENOMIC DNA]</scope>
    <source>
        <strain>ATCC MYA-3404 / T1</strain>
    </source>
</reference>
<proteinExistence type="inferred from homology"/>